<name>SYS_ACICJ</name>
<gene>
    <name evidence="1" type="primary">serS</name>
    <name type="ordered locus">Acry_0957</name>
</gene>
<reference key="1">
    <citation type="submission" date="2007-05" db="EMBL/GenBank/DDBJ databases">
        <title>Complete sequence of chromosome of Acidiphilium cryptum JF-5.</title>
        <authorList>
            <consortium name="US DOE Joint Genome Institute"/>
            <person name="Copeland A."/>
            <person name="Lucas S."/>
            <person name="Lapidus A."/>
            <person name="Barry K."/>
            <person name="Detter J.C."/>
            <person name="Glavina del Rio T."/>
            <person name="Hammon N."/>
            <person name="Israni S."/>
            <person name="Dalin E."/>
            <person name="Tice H."/>
            <person name="Pitluck S."/>
            <person name="Sims D."/>
            <person name="Brettin T."/>
            <person name="Bruce D."/>
            <person name="Han C."/>
            <person name="Schmutz J."/>
            <person name="Larimer F."/>
            <person name="Land M."/>
            <person name="Hauser L."/>
            <person name="Kyrpides N."/>
            <person name="Kim E."/>
            <person name="Magnuson T."/>
            <person name="Richardson P."/>
        </authorList>
    </citation>
    <scope>NUCLEOTIDE SEQUENCE [LARGE SCALE GENOMIC DNA]</scope>
    <source>
        <strain>JF-5</strain>
    </source>
</reference>
<keyword id="KW-0030">Aminoacyl-tRNA synthetase</keyword>
<keyword id="KW-0067">ATP-binding</keyword>
<keyword id="KW-0963">Cytoplasm</keyword>
<keyword id="KW-0436">Ligase</keyword>
<keyword id="KW-0547">Nucleotide-binding</keyword>
<keyword id="KW-0648">Protein biosynthesis</keyword>
<keyword id="KW-1185">Reference proteome</keyword>
<organism>
    <name type="scientific">Acidiphilium cryptum (strain JF-5)</name>
    <dbReference type="NCBI Taxonomy" id="349163"/>
    <lineage>
        <taxon>Bacteria</taxon>
        <taxon>Pseudomonadati</taxon>
        <taxon>Pseudomonadota</taxon>
        <taxon>Alphaproteobacteria</taxon>
        <taxon>Acetobacterales</taxon>
        <taxon>Acidocellaceae</taxon>
        <taxon>Acidiphilium</taxon>
    </lineage>
</organism>
<sequence length="433" mass="47129">MHDLKAIRDDAAAFGAAMRRRGLAGPEGADEGAAAPIRALDEERRRAQTELQGHETRRNELARAIGQAKRAGEDTTALEAEGTALRQSIETANAWLAESARKLDELLAVLPNVLDADVPDGPDETANVEQKRVGAPPSFDFEARQHFELGEALGLMDFAGAAKLAGARFTVLRGDLARLERALGQFMLDLHVNEHGYTEVSPPLLVNDATMYGTGQLPKFAEDLFRTTDGRWLIPTAEVPLTNLAAGEILDAASLPLRMTALTPSFRSEAGSAGRDTRGMLRQHQFWKVELVSLTTPEASADEHERMTSCAESVLERLGLPYRRMLLCAGDTGFSSAKTYDLEVWLPGQGAYREISSCSNCRAFQARRMNARYRPPQTGPKPAKPDFVHTLNGSGVATGRALIAVMENYQNADGSITVPDALRPYMRGCDRIG</sequence>
<feature type="chain" id="PRO_1000019601" description="Serine--tRNA ligase">
    <location>
        <begin position="1"/>
        <end position="433"/>
    </location>
</feature>
<feature type="binding site" evidence="1">
    <location>
        <begin position="236"/>
        <end position="238"/>
    </location>
    <ligand>
        <name>L-serine</name>
        <dbReference type="ChEBI" id="CHEBI:33384"/>
    </ligand>
</feature>
<feature type="binding site" evidence="1">
    <location>
        <begin position="267"/>
        <end position="269"/>
    </location>
    <ligand>
        <name>ATP</name>
        <dbReference type="ChEBI" id="CHEBI:30616"/>
    </ligand>
</feature>
<feature type="binding site" evidence="1">
    <location>
        <position position="290"/>
    </location>
    <ligand>
        <name>L-serine</name>
        <dbReference type="ChEBI" id="CHEBI:33384"/>
    </ligand>
</feature>
<feature type="binding site" evidence="1">
    <location>
        <begin position="354"/>
        <end position="357"/>
    </location>
    <ligand>
        <name>ATP</name>
        <dbReference type="ChEBI" id="CHEBI:30616"/>
    </ligand>
</feature>
<feature type="binding site" evidence="1">
    <location>
        <position position="394"/>
    </location>
    <ligand>
        <name>L-serine</name>
        <dbReference type="ChEBI" id="CHEBI:33384"/>
    </ligand>
</feature>
<dbReference type="EC" id="6.1.1.11" evidence="1"/>
<dbReference type="EMBL" id="CP000697">
    <property type="protein sequence ID" value="ABQ30175.1"/>
    <property type="molecule type" value="Genomic_DNA"/>
</dbReference>
<dbReference type="RefSeq" id="WP_007421385.1">
    <property type="nucleotide sequence ID" value="NC_009484.1"/>
</dbReference>
<dbReference type="SMR" id="A5FX43"/>
<dbReference type="STRING" id="349163.Acry_0957"/>
<dbReference type="KEGG" id="acr:Acry_0957"/>
<dbReference type="eggNOG" id="COG0172">
    <property type="taxonomic scope" value="Bacteria"/>
</dbReference>
<dbReference type="HOGENOM" id="CLU_023797_1_1_5"/>
<dbReference type="UniPathway" id="UPA00906">
    <property type="reaction ID" value="UER00895"/>
</dbReference>
<dbReference type="Proteomes" id="UP000000245">
    <property type="component" value="Chromosome"/>
</dbReference>
<dbReference type="GO" id="GO:0005737">
    <property type="term" value="C:cytoplasm"/>
    <property type="evidence" value="ECO:0007669"/>
    <property type="project" value="UniProtKB-SubCell"/>
</dbReference>
<dbReference type="GO" id="GO:0005524">
    <property type="term" value="F:ATP binding"/>
    <property type="evidence" value="ECO:0007669"/>
    <property type="project" value="UniProtKB-UniRule"/>
</dbReference>
<dbReference type="GO" id="GO:0004828">
    <property type="term" value="F:serine-tRNA ligase activity"/>
    <property type="evidence" value="ECO:0007669"/>
    <property type="project" value="UniProtKB-UniRule"/>
</dbReference>
<dbReference type="GO" id="GO:0016260">
    <property type="term" value="P:selenocysteine biosynthetic process"/>
    <property type="evidence" value="ECO:0007669"/>
    <property type="project" value="UniProtKB-UniRule"/>
</dbReference>
<dbReference type="GO" id="GO:0006434">
    <property type="term" value="P:seryl-tRNA aminoacylation"/>
    <property type="evidence" value="ECO:0007669"/>
    <property type="project" value="UniProtKB-UniRule"/>
</dbReference>
<dbReference type="CDD" id="cd00770">
    <property type="entry name" value="SerRS_core"/>
    <property type="match status" value="1"/>
</dbReference>
<dbReference type="Gene3D" id="3.30.930.10">
    <property type="entry name" value="Bira Bifunctional Protein, Domain 2"/>
    <property type="match status" value="1"/>
</dbReference>
<dbReference type="Gene3D" id="1.10.287.40">
    <property type="entry name" value="Serine-tRNA synthetase, tRNA binding domain"/>
    <property type="match status" value="1"/>
</dbReference>
<dbReference type="HAMAP" id="MF_00176">
    <property type="entry name" value="Ser_tRNA_synth_type1"/>
    <property type="match status" value="1"/>
</dbReference>
<dbReference type="InterPro" id="IPR002314">
    <property type="entry name" value="aa-tRNA-synt_IIb"/>
</dbReference>
<dbReference type="InterPro" id="IPR006195">
    <property type="entry name" value="aa-tRNA-synth_II"/>
</dbReference>
<dbReference type="InterPro" id="IPR045864">
    <property type="entry name" value="aa-tRNA-synth_II/BPL/LPL"/>
</dbReference>
<dbReference type="InterPro" id="IPR002317">
    <property type="entry name" value="Ser-tRNA-ligase_type_1"/>
</dbReference>
<dbReference type="InterPro" id="IPR015866">
    <property type="entry name" value="Ser-tRNA-synth_1_N"/>
</dbReference>
<dbReference type="InterPro" id="IPR042103">
    <property type="entry name" value="SerRS_1_N_sf"/>
</dbReference>
<dbReference type="InterPro" id="IPR033729">
    <property type="entry name" value="SerRS_core"/>
</dbReference>
<dbReference type="InterPro" id="IPR010978">
    <property type="entry name" value="tRNA-bd_arm"/>
</dbReference>
<dbReference type="NCBIfam" id="TIGR00414">
    <property type="entry name" value="serS"/>
    <property type="match status" value="1"/>
</dbReference>
<dbReference type="PANTHER" id="PTHR43697:SF1">
    <property type="entry name" value="SERINE--TRNA LIGASE"/>
    <property type="match status" value="1"/>
</dbReference>
<dbReference type="PANTHER" id="PTHR43697">
    <property type="entry name" value="SERYL-TRNA SYNTHETASE"/>
    <property type="match status" value="1"/>
</dbReference>
<dbReference type="Pfam" id="PF02403">
    <property type="entry name" value="Seryl_tRNA_N"/>
    <property type="match status" value="1"/>
</dbReference>
<dbReference type="Pfam" id="PF00587">
    <property type="entry name" value="tRNA-synt_2b"/>
    <property type="match status" value="1"/>
</dbReference>
<dbReference type="PIRSF" id="PIRSF001529">
    <property type="entry name" value="Ser-tRNA-synth_IIa"/>
    <property type="match status" value="1"/>
</dbReference>
<dbReference type="PRINTS" id="PR00981">
    <property type="entry name" value="TRNASYNTHSER"/>
</dbReference>
<dbReference type="SUPFAM" id="SSF55681">
    <property type="entry name" value="Class II aaRS and biotin synthetases"/>
    <property type="match status" value="1"/>
</dbReference>
<dbReference type="SUPFAM" id="SSF46589">
    <property type="entry name" value="tRNA-binding arm"/>
    <property type="match status" value="1"/>
</dbReference>
<dbReference type="PROSITE" id="PS50862">
    <property type="entry name" value="AA_TRNA_LIGASE_II"/>
    <property type="match status" value="1"/>
</dbReference>
<comment type="function">
    <text evidence="1">Catalyzes the attachment of serine to tRNA(Ser). Is also able to aminoacylate tRNA(Sec) with serine, to form the misacylated tRNA L-seryl-tRNA(Sec), which will be further converted into selenocysteinyl-tRNA(Sec).</text>
</comment>
<comment type="catalytic activity">
    <reaction evidence="1">
        <text>tRNA(Ser) + L-serine + ATP = L-seryl-tRNA(Ser) + AMP + diphosphate + H(+)</text>
        <dbReference type="Rhea" id="RHEA:12292"/>
        <dbReference type="Rhea" id="RHEA-COMP:9669"/>
        <dbReference type="Rhea" id="RHEA-COMP:9703"/>
        <dbReference type="ChEBI" id="CHEBI:15378"/>
        <dbReference type="ChEBI" id="CHEBI:30616"/>
        <dbReference type="ChEBI" id="CHEBI:33019"/>
        <dbReference type="ChEBI" id="CHEBI:33384"/>
        <dbReference type="ChEBI" id="CHEBI:78442"/>
        <dbReference type="ChEBI" id="CHEBI:78533"/>
        <dbReference type="ChEBI" id="CHEBI:456215"/>
        <dbReference type="EC" id="6.1.1.11"/>
    </reaction>
</comment>
<comment type="catalytic activity">
    <reaction evidence="1">
        <text>tRNA(Sec) + L-serine + ATP = L-seryl-tRNA(Sec) + AMP + diphosphate + H(+)</text>
        <dbReference type="Rhea" id="RHEA:42580"/>
        <dbReference type="Rhea" id="RHEA-COMP:9742"/>
        <dbReference type="Rhea" id="RHEA-COMP:10128"/>
        <dbReference type="ChEBI" id="CHEBI:15378"/>
        <dbReference type="ChEBI" id="CHEBI:30616"/>
        <dbReference type="ChEBI" id="CHEBI:33019"/>
        <dbReference type="ChEBI" id="CHEBI:33384"/>
        <dbReference type="ChEBI" id="CHEBI:78442"/>
        <dbReference type="ChEBI" id="CHEBI:78533"/>
        <dbReference type="ChEBI" id="CHEBI:456215"/>
        <dbReference type="EC" id="6.1.1.11"/>
    </reaction>
</comment>
<comment type="pathway">
    <text evidence="1">Aminoacyl-tRNA biosynthesis; selenocysteinyl-tRNA(Sec) biosynthesis; L-seryl-tRNA(Sec) from L-serine and tRNA(Sec): step 1/1.</text>
</comment>
<comment type="subunit">
    <text evidence="1">Homodimer. The tRNA molecule binds across the dimer.</text>
</comment>
<comment type="subcellular location">
    <subcellularLocation>
        <location evidence="1">Cytoplasm</location>
    </subcellularLocation>
</comment>
<comment type="domain">
    <text evidence="1">Consists of two distinct domains, a catalytic core and a N-terminal extension that is involved in tRNA binding.</text>
</comment>
<comment type="similarity">
    <text evidence="1">Belongs to the class-II aminoacyl-tRNA synthetase family. Type-1 seryl-tRNA synthetase subfamily.</text>
</comment>
<evidence type="ECO:0000255" key="1">
    <source>
        <dbReference type="HAMAP-Rule" id="MF_00176"/>
    </source>
</evidence>
<proteinExistence type="inferred from homology"/>
<protein>
    <recommendedName>
        <fullName evidence="1">Serine--tRNA ligase</fullName>
        <ecNumber evidence="1">6.1.1.11</ecNumber>
    </recommendedName>
    <alternativeName>
        <fullName evidence="1">Seryl-tRNA synthetase</fullName>
        <shortName evidence="1">SerRS</shortName>
    </alternativeName>
    <alternativeName>
        <fullName evidence="1">Seryl-tRNA(Ser/Sec) synthetase</fullName>
    </alternativeName>
</protein>
<accession>A5FX43</accession>